<comment type="function">
    <text evidence="1">Catalyzes the aldol-type condensation of 2-oxoglutarate with acetyl-CoA to yield homocitrate. Carries out the first step of the alpha-aminoadipate (AAA) lysine biosynthesis pathway.</text>
</comment>
<comment type="catalytic activity">
    <reaction evidence="1">
        <text>acetyl-CoA + 2-oxoglutarate + H2O = (2R)-homocitrate + CoA + H(+)</text>
        <dbReference type="Rhea" id="RHEA:12929"/>
        <dbReference type="ChEBI" id="CHEBI:15377"/>
        <dbReference type="ChEBI" id="CHEBI:15378"/>
        <dbReference type="ChEBI" id="CHEBI:16810"/>
        <dbReference type="ChEBI" id="CHEBI:57287"/>
        <dbReference type="ChEBI" id="CHEBI:57288"/>
        <dbReference type="ChEBI" id="CHEBI:58884"/>
        <dbReference type="EC" id="2.3.3.14"/>
    </reaction>
    <physiologicalReaction direction="left-to-right" evidence="1">
        <dbReference type="Rhea" id="RHEA:12930"/>
    </physiologicalReaction>
</comment>
<comment type="cofactor">
    <cofactor evidence="1">
        <name>Mg(2+)</name>
        <dbReference type="ChEBI" id="CHEBI:18420"/>
    </cofactor>
    <cofactor evidence="1">
        <name>Mn(2+)</name>
        <dbReference type="ChEBI" id="CHEBI:29035"/>
    </cofactor>
</comment>
<comment type="pathway">
    <text evidence="1">Amino-acid biosynthesis; L-lysine biosynthesis via AAA pathway; L-alpha-aminoadipate from 2-oxoglutarate: step 1/5.</text>
</comment>
<comment type="similarity">
    <text evidence="2">Belongs to the alpha-IPM synthase/homocitrate synthase family. Homocitrate synthase LYS20/LYS21 subfamily.</text>
</comment>
<keyword id="KW-0028">Amino-acid biosynthesis</keyword>
<keyword id="KW-0457">Lysine biosynthesis</keyword>
<keyword id="KW-0460">Magnesium</keyword>
<keyword id="KW-0464">Manganese</keyword>
<keyword id="KW-0479">Metal-binding</keyword>
<keyword id="KW-0808">Transferase</keyword>
<accession>C4KGW9</accession>
<sequence length="461" mass="50825">MIKVGILDSTLREGEQTPGVIFTVDQRVEIAKALSDLGVSMIEAGHPAVSPDIYEGIKRIVKLKKEGIITSEIVGHSRAVKRDIEIAAELEVDRIAIFYGVSDLHLKAKHKATREEALRTIAETISYAKNHGVKVRFTAEDGSRTDFDFLVTVSKTARDAGADRVSIADTVGILYPSKTKELFSALTREVPNLEFDIHAHNDLGLAVANALAAIEGGATIIHATVNGLGERVGIVPLQQIAAAIKYHFGIEVVKLDKLQYVSSLVEKYSGIPMPPNYPITGDYAFLHKAGVHVAGVLNDPRTYEFMPPETFGRTRDYTIDKYTGKHALRDKYEKLGVKISDAEMDQILAKIKSNTTIRFYRDVDLLELAEEVTGRVLKPRPPEQIEALISVKCDSNVYTTSVTRRLSVINGVKEVMEISGDYDILVKVQAKDSNELNQIIESIRATKGVRSTLTSLVLKKM</sequence>
<name>HOSA_SACI6</name>
<feature type="chain" id="PRO_1000213318" description="Homocitrate synthase">
    <location>
        <begin position="1"/>
        <end position="461"/>
    </location>
</feature>
<feature type="domain" description="Pyruvate carboxyltransferase" evidence="3">
    <location>
        <begin position="4"/>
        <end position="259"/>
    </location>
</feature>
<feature type="active site" description="Proton acceptor" evidence="1">
    <location>
        <position position="292"/>
    </location>
</feature>
<feature type="binding site" evidence="1">
    <location>
        <position position="12"/>
    </location>
    <ligand>
        <name>2-oxoglutarate</name>
        <dbReference type="ChEBI" id="CHEBI:16810"/>
    </ligand>
</feature>
<feature type="binding site" evidence="1">
    <location>
        <position position="13"/>
    </location>
    <ligand>
        <name>Mg(2+)</name>
        <dbReference type="ChEBI" id="CHEBI:18420"/>
    </ligand>
</feature>
<feature type="binding site" evidence="1">
    <location>
        <position position="76"/>
    </location>
    <ligand>
        <name>2-oxoglutarate</name>
        <dbReference type="ChEBI" id="CHEBI:16810"/>
    </ligand>
</feature>
<feature type="binding site" evidence="1">
    <location>
        <position position="136"/>
    </location>
    <ligand>
        <name>2-oxoglutarate</name>
        <dbReference type="ChEBI" id="CHEBI:16810"/>
    </ligand>
</feature>
<feature type="binding site" evidence="1">
    <location>
        <position position="170"/>
    </location>
    <ligand>
        <name>2-oxoglutarate</name>
        <dbReference type="ChEBI" id="CHEBI:16810"/>
    </ligand>
</feature>
<feature type="binding site" evidence="1">
    <location>
        <position position="198"/>
    </location>
    <ligand>
        <name>Mg(2+)</name>
        <dbReference type="ChEBI" id="CHEBI:18420"/>
    </ligand>
</feature>
<feature type="binding site" evidence="1">
    <location>
        <position position="200"/>
    </location>
    <ligand>
        <name>Mg(2+)</name>
        <dbReference type="ChEBI" id="CHEBI:18420"/>
    </ligand>
</feature>
<evidence type="ECO:0000250" key="1">
    <source>
        <dbReference type="UniProtKB" id="O87198"/>
    </source>
</evidence>
<evidence type="ECO:0000255" key="2">
    <source>
        <dbReference type="HAMAP-Rule" id="MF_02222"/>
    </source>
</evidence>
<evidence type="ECO:0000255" key="3">
    <source>
        <dbReference type="PROSITE-ProRule" id="PRU01151"/>
    </source>
</evidence>
<organism>
    <name type="scientific">Saccharolobus islandicus (strain M.16.4 / Kamchatka #3)</name>
    <name type="common">Sulfolobus islandicus</name>
    <dbReference type="NCBI Taxonomy" id="426118"/>
    <lineage>
        <taxon>Archaea</taxon>
        <taxon>Thermoproteota</taxon>
        <taxon>Thermoprotei</taxon>
        <taxon>Sulfolobales</taxon>
        <taxon>Sulfolobaceae</taxon>
        <taxon>Saccharolobus</taxon>
    </lineage>
</organism>
<reference key="1">
    <citation type="journal article" date="2009" name="Proc. Natl. Acad. Sci. U.S.A.">
        <title>Biogeography of the Sulfolobus islandicus pan-genome.</title>
        <authorList>
            <person name="Reno M.L."/>
            <person name="Held N.L."/>
            <person name="Fields C.J."/>
            <person name="Burke P.V."/>
            <person name="Whitaker R.J."/>
        </authorList>
    </citation>
    <scope>NUCLEOTIDE SEQUENCE [LARGE SCALE GENOMIC DNA]</scope>
    <source>
        <strain>M.16.4 / Kamchatka #3</strain>
    </source>
</reference>
<dbReference type="EC" id="2.3.3.14" evidence="1 2"/>
<dbReference type="EMBL" id="CP001402">
    <property type="protein sequence ID" value="ACR41833.1"/>
    <property type="molecule type" value="Genomic_DNA"/>
</dbReference>
<dbReference type="SMR" id="C4KGW9"/>
<dbReference type="KEGG" id="sid:M164_1229"/>
<dbReference type="HOGENOM" id="CLU_022158_4_0_2"/>
<dbReference type="UniPathway" id="UPA00033">
    <property type="reaction ID" value="UER00028"/>
</dbReference>
<dbReference type="Proteomes" id="UP000001479">
    <property type="component" value="Chromosome"/>
</dbReference>
<dbReference type="GO" id="GO:0003852">
    <property type="term" value="F:2-isopropylmalate synthase activity"/>
    <property type="evidence" value="ECO:0007669"/>
    <property type="project" value="TreeGrafter"/>
</dbReference>
<dbReference type="GO" id="GO:0004410">
    <property type="term" value="F:homocitrate synthase activity"/>
    <property type="evidence" value="ECO:0007669"/>
    <property type="project" value="UniProtKB-UniRule"/>
</dbReference>
<dbReference type="GO" id="GO:0046872">
    <property type="term" value="F:metal ion binding"/>
    <property type="evidence" value="ECO:0007669"/>
    <property type="project" value="UniProtKB-KW"/>
</dbReference>
<dbReference type="GO" id="GO:0009098">
    <property type="term" value="P:L-leucine biosynthetic process"/>
    <property type="evidence" value="ECO:0007669"/>
    <property type="project" value="TreeGrafter"/>
</dbReference>
<dbReference type="GO" id="GO:0019878">
    <property type="term" value="P:lysine biosynthetic process via aminoadipic acid"/>
    <property type="evidence" value="ECO:0007669"/>
    <property type="project" value="UniProtKB-UniRule"/>
</dbReference>
<dbReference type="CDD" id="cd07940">
    <property type="entry name" value="DRE_TIM_IPMS"/>
    <property type="match status" value="1"/>
</dbReference>
<dbReference type="Gene3D" id="1.10.238.260">
    <property type="match status" value="1"/>
</dbReference>
<dbReference type="Gene3D" id="3.30.70.920">
    <property type="match status" value="1"/>
</dbReference>
<dbReference type="Gene3D" id="3.20.20.70">
    <property type="entry name" value="Aldolase class I"/>
    <property type="match status" value="1"/>
</dbReference>
<dbReference type="HAMAP" id="MF_02222">
    <property type="entry name" value="Homocitr_synth_fung_arch"/>
    <property type="match status" value="1"/>
</dbReference>
<dbReference type="InterPro" id="IPR050073">
    <property type="entry name" value="2-IPM_HCS-like"/>
</dbReference>
<dbReference type="InterPro" id="IPR002034">
    <property type="entry name" value="AIPM/Hcit_synth_CS"/>
</dbReference>
<dbReference type="InterPro" id="IPR013785">
    <property type="entry name" value="Aldolase_TIM"/>
</dbReference>
<dbReference type="InterPro" id="IPR011008">
    <property type="entry name" value="Dimeric_a/b-barrel"/>
</dbReference>
<dbReference type="InterPro" id="IPR011872">
    <property type="entry name" value="Homocitrate_synth"/>
</dbReference>
<dbReference type="InterPro" id="IPR054691">
    <property type="entry name" value="LeuA/HCS_post-cat"/>
</dbReference>
<dbReference type="InterPro" id="IPR000891">
    <property type="entry name" value="PYR_CT"/>
</dbReference>
<dbReference type="InterPro" id="IPR019887">
    <property type="entry name" value="Tscrpt_reg_AsnC/Lrp_C"/>
</dbReference>
<dbReference type="NCBIfam" id="TIGR02146">
    <property type="entry name" value="LysS_fung_arch"/>
    <property type="match status" value="1"/>
</dbReference>
<dbReference type="NCBIfam" id="NF002085">
    <property type="entry name" value="PRK00915.1-2"/>
    <property type="match status" value="1"/>
</dbReference>
<dbReference type="PANTHER" id="PTHR10277:SF63">
    <property type="entry name" value="HOMOCITRATE SYNTHASE"/>
    <property type="match status" value="1"/>
</dbReference>
<dbReference type="PANTHER" id="PTHR10277">
    <property type="entry name" value="HOMOCITRATE SYNTHASE-RELATED"/>
    <property type="match status" value="1"/>
</dbReference>
<dbReference type="Pfam" id="PF01037">
    <property type="entry name" value="AsnC_trans_reg"/>
    <property type="match status" value="1"/>
</dbReference>
<dbReference type="Pfam" id="PF22617">
    <property type="entry name" value="HCS_D2"/>
    <property type="match status" value="1"/>
</dbReference>
<dbReference type="Pfam" id="PF00682">
    <property type="entry name" value="HMGL-like"/>
    <property type="match status" value="1"/>
</dbReference>
<dbReference type="SUPFAM" id="SSF51569">
    <property type="entry name" value="Aldolase"/>
    <property type="match status" value="1"/>
</dbReference>
<dbReference type="SUPFAM" id="SSF54909">
    <property type="entry name" value="Dimeric alpha+beta barrel"/>
    <property type="match status" value="1"/>
</dbReference>
<dbReference type="PROSITE" id="PS00816">
    <property type="entry name" value="AIPM_HOMOCIT_SYNTH_2"/>
    <property type="match status" value="1"/>
</dbReference>
<dbReference type="PROSITE" id="PS50991">
    <property type="entry name" value="PYR_CT"/>
    <property type="match status" value="1"/>
</dbReference>
<proteinExistence type="inferred from homology"/>
<protein>
    <recommendedName>
        <fullName evidence="2">Homocitrate synthase</fullName>
        <shortName evidence="2">HCS</shortName>
        <ecNumber evidence="1 2">2.3.3.14</ecNumber>
    </recommendedName>
</protein>
<gene>
    <name type="ordered locus">M164_1229</name>
</gene>